<name>THIM2_CLOBJ</name>
<gene>
    <name evidence="1" type="primary">thiM2</name>
    <name type="ordered locus">CLM_2460</name>
</gene>
<organism>
    <name type="scientific">Clostridium botulinum (strain Kyoto / Type A2)</name>
    <dbReference type="NCBI Taxonomy" id="536232"/>
    <lineage>
        <taxon>Bacteria</taxon>
        <taxon>Bacillati</taxon>
        <taxon>Bacillota</taxon>
        <taxon>Clostridia</taxon>
        <taxon>Eubacteriales</taxon>
        <taxon>Clostridiaceae</taxon>
        <taxon>Clostridium</taxon>
    </lineage>
</organism>
<sequence length="265" mass="28737">MQIRQSVKFKKPLIHYITNPISINDCANMILAVGAKPIMAEHPLEVSEITSISESLGINLGNITDNKMKSMLISGKISYEKKIPQVIDLVGVGCSKLRLDYAKKFILECHPNVIKGNMSEMKAIYGIKSSAKGIDVGACDIITEQNFDENIEMIKRLSMETGSVVAATGVVDIISNGTYTYIISNGCEMLSMITGTGCMLTGIIASYISSGNILEGTALAIVLMGICGELSQHVKGTGSFRNELIDNIFSISDDIIIKKIRINSY</sequence>
<evidence type="ECO:0000255" key="1">
    <source>
        <dbReference type="HAMAP-Rule" id="MF_00228"/>
    </source>
</evidence>
<reference key="1">
    <citation type="submission" date="2008-10" db="EMBL/GenBank/DDBJ databases">
        <title>Genome sequence of Clostridium botulinum A2 Kyoto.</title>
        <authorList>
            <person name="Shrivastava S."/>
            <person name="Brinkac L.M."/>
            <person name="Brown J.L."/>
            <person name="Bruce D."/>
            <person name="Detter C.C."/>
            <person name="Johnson E.A."/>
            <person name="Munk C.A."/>
            <person name="Smith L.A."/>
            <person name="Smith T.J."/>
            <person name="Sutton G."/>
            <person name="Brettin T.S."/>
        </authorList>
    </citation>
    <scope>NUCLEOTIDE SEQUENCE [LARGE SCALE GENOMIC DNA]</scope>
    <source>
        <strain>Kyoto / Type A2</strain>
    </source>
</reference>
<accession>C1FR28</accession>
<proteinExistence type="inferred from homology"/>
<feature type="chain" id="PRO_0000383844" description="Hydroxyethylthiazole kinase 2">
    <location>
        <begin position="1"/>
        <end position="265"/>
    </location>
</feature>
<feature type="binding site" evidence="1">
    <location>
        <position position="39"/>
    </location>
    <ligand>
        <name>substrate</name>
    </ligand>
</feature>
<feature type="binding site" evidence="1">
    <location>
        <position position="115"/>
    </location>
    <ligand>
        <name>ATP</name>
        <dbReference type="ChEBI" id="CHEBI:30616"/>
    </ligand>
</feature>
<feature type="binding site" evidence="1">
    <location>
        <position position="168"/>
    </location>
    <ligand>
        <name>ATP</name>
        <dbReference type="ChEBI" id="CHEBI:30616"/>
    </ligand>
</feature>
<feature type="binding site" evidence="1">
    <location>
        <position position="195"/>
    </location>
    <ligand>
        <name>substrate</name>
    </ligand>
</feature>
<keyword id="KW-0067">ATP-binding</keyword>
<keyword id="KW-0418">Kinase</keyword>
<keyword id="KW-0460">Magnesium</keyword>
<keyword id="KW-0479">Metal-binding</keyword>
<keyword id="KW-0547">Nucleotide-binding</keyword>
<keyword id="KW-0784">Thiamine biosynthesis</keyword>
<keyword id="KW-0808">Transferase</keyword>
<protein>
    <recommendedName>
        <fullName evidence="1">Hydroxyethylthiazole kinase 2</fullName>
        <ecNumber evidence="1">2.7.1.50</ecNumber>
    </recommendedName>
    <alternativeName>
        <fullName evidence="1">4-methyl-5-beta-hydroxyethylthiazole kinase 2</fullName>
        <shortName evidence="1">TH kinase 2</shortName>
        <shortName evidence="1">Thz kinase 2</shortName>
    </alternativeName>
</protein>
<comment type="function">
    <text evidence="1">Catalyzes the phosphorylation of the hydroxyl group of 4-methyl-5-beta-hydroxyethylthiazole (THZ).</text>
</comment>
<comment type="catalytic activity">
    <reaction evidence="1">
        <text>5-(2-hydroxyethyl)-4-methylthiazole + ATP = 4-methyl-5-(2-phosphooxyethyl)-thiazole + ADP + H(+)</text>
        <dbReference type="Rhea" id="RHEA:24212"/>
        <dbReference type="ChEBI" id="CHEBI:15378"/>
        <dbReference type="ChEBI" id="CHEBI:17957"/>
        <dbReference type="ChEBI" id="CHEBI:30616"/>
        <dbReference type="ChEBI" id="CHEBI:58296"/>
        <dbReference type="ChEBI" id="CHEBI:456216"/>
        <dbReference type="EC" id="2.7.1.50"/>
    </reaction>
</comment>
<comment type="cofactor">
    <cofactor evidence="1">
        <name>Mg(2+)</name>
        <dbReference type="ChEBI" id="CHEBI:18420"/>
    </cofactor>
</comment>
<comment type="pathway">
    <text evidence="1">Cofactor biosynthesis; thiamine diphosphate biosynthesis; 4-methyl-5-(2-phosphoethyl)-thiazole from 5-(2-hydroxyethyl)-4-methylthiazole: step 1/1.</text>
</comment>
<comment type="similarity">
    <text evidence="1">Belongs to the Thz kinase family.</text>
</comment>
<dbReference type="EC" id="2.7.1.50" evidence="1"/>
<dbReference type="EMBL" id="CP001581">
    <property type="protein sequence ID" value="ACO83484.1"/>
    <property type="molecule type" value="Genomic_DNA"/>
</dbReference>
<dbReference type="SMR" id="C1FR28"/>
<dbReference type="KEGG" id="cby:CLM_2460"/>
<dbReference type="eggNOG" id="COG2145">
    <property type="taxonomic scope" value="Bacteria"/>
</dbReference>
<dbReference type="HOGENOM" id="CLU_019943_0_0_9"/>
<dbReference type="UniPathway" id="UPA00060">
    <property type="reaction ID" value="UER00139"/>
</dbReference>
<dbReference type="Proteomes" id="UP000001374">
    <property type="component" value="Chromosome"/>
</dbReference>
<dbReference type="GO" id="GO:0005524">
    <property type="term" value="F:ATP binding"/>
    <property type="evidence" value="ECO:0007669"/>
    <property type="project" value="UniProtKB-UniRule"/>
</dbReference>
<dbReference type="GO" id="GO:0004417">
    <property type="term" value="F:hydroxyethylthiazole kinase activity"/>
    <property type="evidence" value="ECO:0007669"/>
    <property type="project" value="UniProtKB-UniRule"/>
</dbReference>
<dbReference type="GO" id="GO:0000287">
    <property type="term" value="F:magnesium ion binding"/>
    <property type="evidence" value="ECO:0007669"/>
    <property type="project" value="UniProtKB-UniRule"/>
</dbReference>
<dbReference type="GO" id="GO:0009228">
    <property type="term" value="P:thiamine biosynthetic process"/>
    <property type="evidence" value="ECO:0007669"/>
    <property type="project" value="UniProtKB-KW"/>
</dbReference>
<dbReference type="GO" id="GO:0009229">
    <property type="term" value="P:thiamine diphosphate biosynthetic process"/>
    <property type="evidence" value="ECO:0007669"/>
    <property type="project" value="UniProtKB-UniRule"/>
</dbReference>
<dbReference type="CDD" id="cd01170">
    <property type="entry name" value="THZ_kinase"/>
    <property type="match status" value="1"/>
</dbReference>
<dbReference type="Gene3D" id="3.40.1190.20">
    <property type="match status" value="1"/>
</dbReference>
<dbReference type="HAMAP" id="MF_00228">
    <property type="entry name" value="Thz_kinase"/>
    <property type="match status" value="1"/>
</dbReference>
<dbReference type="InterPro" id="IPR000417">
    <property type="entry name" value="Hyethyz_kinase"/>
</dbReference>
<dbReference type="InterPro" id="IPR029056">
    <property type="entry name" value="Ribokinase-like"/>
</dbReference>
<dbReference type="NCBIfam" id="NF006830">
    <property type="entry name" value="PRK09355.1"/>
    <property type="match status" value="1"/>
</dbReference>
<dbReference type="Pfam" id="PF02110">
    <property type="entry name" value="HK"/>
    <property type="match status" value="1"/>
</dbReference>
<dbReference type="PIRSF" id="PIRSF000513">
    <property type="entry name" value="Thz_kinase"/>
    <property type="match status" value="1"/>
</dbReference>
<dbReference type="PRINTS" id="PR01099">
    <property type="entry name" value="HYETHTZKNASE"/>
</dbReference>
<dbReference type="SUPFAM" id="SSF53613">
    <property type="entry name" value="Ribokinase-like"/>
    <property type="match status" value="1"/>
</dbReference>